<reference key="1">
    <citation type="journal article" date="2008" name="J. Bacteriol.">
        <title>Genome sequence of Lactobacillus helveticus: an organism distinguished by selective gene loss and IS element expansion.</title>
        <authorList>
            <person name="Callanan M."/>
            <person name="Kaleta P."/>
            <person name="O'Callaghan J."/>
            <person name="O'Sullivan O."/>
            <person name="Jordan K."/>
            <person name="McAuliffe O."/>
            <person name="Sangrador-Vegas A."/>
            <person name="Slattery L."/>
            <person name="Fitzgerald G.F."/>
            <person name="Beresford T."/>
            <person name="Ross R.P."/>
        </authorList>
    </citation>
    <scope>NUCLEOTIDE SEQUENCE [LARGE SCALE GENOMIC DNA]</scope>
    <source>
        <strain>DPC 4571</strain>
    </source>
</reference>
<keyword id="KW-0067">ATP-binding</keyword>
<keyword id="KW-0227">DNA damage</keyword>
<keyword id="KW-0234">DNA repair</keyword>
<keyword id="KW-0238">DNA-binding</keyword>
<keyword id="KW-0547">Nucleotide-binding</keyword>
<protein>
    <recommendedName>
        <fullName evidence="1">DNA mismatch repair protein MutS</fullName>
    </recommendedName>
</protein>
<evidence type="ECO:0000255" key="1">
    <source>
        <dbReference type="HAMAP-Rule" id="MF_00096"/>
    </source>
</evidence>
<evidence type="ECO:0000256" key="2">
    <source>
        <dbReference type="SAM" id="MobiDB-lite"/>
    </source>
</evidence>
<sequence length="858" mass="95580">MMEQYYEIKKQYPDAFLFYRVGDFYELFEDDAVKGAQILELTLTHRSNKTKNPIPMAGVPHMAVDTYVNTLVEKGYKVALCEQLEDPKKAKGMVKRGIIQLVTPGTMMNEGPNDAKDSNYLTSVVTTKSGFGLAYSDLSTGEIYSTHLKSFAAVSNELLSLRTREVVYNGPLTEQSKDFMHKANITVSAPTPIEGEHAEISYVEQNLTNGAEKSATRQLVGYLLSTQKRSLAHLQIAKSYEVNQYLQMSHTVQNNLELVASAKTGKKMGSLFWVLDKTHTAMGGRLLKQWLARPLLNVDIINHREKMVQALLDGYFTRENTIDALKGVYDLERLTGRIAFGNVNARELLQLSRSLQAVPVILDALNQSDSDVLTDFAKKIDPLKGVAELISTTLVKDPPLLTTEGGLIRDGVDKQLDRYRDAMNNGKKWLVQMETDERQKTGIENLKVGFNKVFGYYIQVSNGNKSKVPLDRYTRKQTLTNAERYITPELKEHENLILEAQTRSTDLEYDLFVQLRDEVKKYIPALQKLGNQLAALDVYCGFATVAEQNNYCRPSFHTDSQDIDVVNGRHPVVEKVMTAGSYIPNDVKMDSATNIFLITGPNMSGKSTYMRQMALIAIMAQVGSFVPADSAALPIFDQIFTRIGAADDLISGQSTFMVEMSEANAALQYATKRSLVLFDEIGRGTATYDGMALAGAIVKYLHDKVGAKALFATHYHELTSLDETLDYLKNIHVGATEENGKLIFLHKILPGPADQSYGIHVAQLAGLPRAVLREATKLLKRLEAQGSELAPVSQQLDLFAQPEAASDEVDDNNSENSPMTDAEQEVLDDISNLYLADKTPLQIMQMVANWQKDLKDDK</sequence>
<gene>
    <name evidence="1" type="primary">mutS</name>
    <name type="ordered locus">lhv_0427</name>
</gene>
<accession>A8YTH9</accession>
<comment type="function">
    <text evidence="1">This protein is involved in the repair of mismatches in DNA. It is possible that it carries out the mismatch recognition step. This protein has a weak ATPase activity.</text>
</comment>
<comment type="similarity">
    <text evidence="1">Belongs to the DNA mismatch repair MutS family.</text>
</comment>
<feature type="chain" id="PRO_1000071278" description="DNA mismatch repair protein MutS">
    <location>
        <begin position="1"/>
        <end position="858"/>
    </location>
</feature>
<feature type="region of interest" description="Disordered" evidence="2">
    <location>
        <begin position="803"/>
        <end position="823"/>
    </location>
</feature>
<feature type="binding site" evidence="1">
    <location>
        <begin position="600"/>
        <end position="607"/>
    </location>
    <ligand>
        <name>ATP</name>
        <dbReference type="ChEBI" id="CHEBI:30616"/>
    </ligand>
</feature>
<dbReference type="EMBL" id="CP000517">
    <property type="protein sequence ID" value="ABX26635.1"/>
    <property type="molecule type" value="Genomic_DNA"/>
</dbReference>
<dbReference type="SMR" id="A8YTH9"/>
<dbReference type="KEGG" id="lhe:lhv_0427"/>
<dbReference type="eggNOG" id="COG0249">
    <property type="taxonomic scope" value="Bacteria"/>
</dbReference>
<dbReference type="HOGENOM" id="CLU_002472_4_0_9"/>
<dbReference type="Proteomes" id="UP000000790">
    <property type="component" value="Chromosome"/>
</dbReference>
<dbReference type="GO" id="GO:0005829">
    <property type="term" value="C:cytosol"/>
    <property type="evidence" value="ECO:0007669"/>
    <property type="project" value="TreeGrafter"/>
</dbReference>
<dbReference type="GO" id="GO:0005524">
    <property type="term" value="F:ATP binding"/>
    <property type="evidence" value="ECO:0007669"/>
    <property type="project" value="UniProtKB-UniRule"/>
</dbReference>
<dbReference type="GO" id="GO:0140664">
    <property type="term" value="F:ATP-dependent DNA damage sensor activity"/>
    <property type="evidence" value="ECO:0007669"/>
    <property type="project" value="InterPro"/>
</dbReference>
<dbReference type="GO" id="GO:0003684">
    <property type="term" value="F:damaged DNA binding"/>
    <property type="evidence" value="ECO:0007669"/>
    <property type="project" value="UniProtKB-UniRule"/>
</dbReference>
<dbReference type="GO" id="GO:0030983">
    <property type="term" value="F:mismatched DNA binding"/>
    <property type="evidence" value="ECO:0007669"/>
    <property type="project" value="InterPro"/>
</dbReference>
<dbReference type="GO" id="GO:0006298">
    <property type="term" value="P:mismatch repair"/>
    <property type="evidence" value="ECO:0007669"/>
    <property type="project" value="UniProtKB-UniRule"/>
</dbReference>
<dbReference type="CDD" id="cd03284">
    <property type="entry name" value="ABC_MutS1"/>
    <property type="match status" value="1"/>
</dbReference>
<dbReference type="FunFam" id="1.10.1420.10:FF:000001">
    <property type="entry name" value="DNA mismatch repair protein MutS"/>
    <property type="match status" value="1"/>
</dbReference>
<dbReference type="FunFam" id="3.40.1170.10:FF:000001">
    <property type="entry name" value="DNA mismatch repair protein MutS"/>
    <property type="match status" value="1"/>
</dbReference>
<dbReference type="FunFam" id="3.40.50.300:FF:000870">
    <property type="entry name" value="MutS protein homolog 4"/>
    <property type="match status" value="1"/>
</dbReference>
<dbReference type="Gene3D" id="1.10.1420.10">
    <property type="match status" value="2"/>
</dbReference>
<dbReference type="Gene3D" id="3.40.1170.10">
    <property type="entry name" value="DNA repair protein MutS, domain I"/>
    <property type="match status" value="1"/>
</dbReference>
<dbReference type="Gene3D" id="3.30.420.110">
    <property type="entry name" value="MutS, connector domain"/>
    <property type="match status" value="1"/>
</dbReference>
<dbReference type="Gene3D" id="3.40.50.300">
    <property type="entry name" value="P-loop containing nucleotide triphosphate hydrolases"/>
    <property type="match status" value="1"/>
</dbReference>
<dbReference type="HAMAP" id="MF_00096">
    <property type="entry name" value="MutS"/>
    <property type="match status" value="1"/>
</dbReference>
<dbReference type="InterPro" id="IPR005748">
    <property type="entry name" value="DNA_mismatch_repair_MutS"/>
</dbReference>
<dbReference type="InterPro" id="IPR007695">
    <property type="entry name" value="DNA_mismatch_repair_MutS-lik_N"/>
</dbReference>
<dbReference type="InterPro" id="IPR017261">
    <property type="entry name" value="DNA_mismatch_repair_MutS/MSH"/>
</dbReference>
<dbReference type="InterPro" id="IPR000432">
    <property type="entry name" value="DNA_mismatch_repair_MutS_C"/>
</dbReference>
<dbReference type="InterPro" id="IPR007861">
    <property type="entry name" value="DNA_mismatch_repair_MutS_clamp"/>
</dbReference>
<dbReference type="InterPro" id="IPR007696">
    <property type="entry name" value="DNA_mismatch_repair_MutS_core"/>
</dbReference>
<dbReference type="InterPro" id="IPR016151">
    <property type="entry name" value="DNA_mismatch_repair_MutS_N"/>
</dbReference>
<dbReference type="InterPro" id="IPR036187">
    <property type="entry name" value="DNA_mismatch_repair_MutS_sf"/>
</dbReference>
<dbReference type="InterPro" id="IPR007860">
    <property type="entry name" value="DNA_mmatch_repair_MutS_con_dom"/>
</dbReference>
<dbReference type="InterPro" id="IPR045076">
    <property type="entry name" value="MutS"/>
</dbReference>
<dbReference type="InterPro" id="IPR036678">
    <property type="entry name" value="MutS_con_dom_sf"/>
</dbReference>
<dbReference type="InterPro" id="IPR027417">
    <property type="entry name" value="P-loop_NTPase"/>
</dbReference>
<dbReference type="NCBIfam" id="TIGR01070">
    <property type="entry name" value="mutS1"/>
    <property type="match status" value="1"/>
</dbReference>
<dbReference type="NCBIfam" id="NF003810">
    <property type="entry name" value="PRK05399.1"/>
    <property type="match status" value="1"/>
</dbReference>
<dbReference type="PANTHER" id="PTHR11361:SF34">
    <property type="entry name" value="DNA MISMATCH REPAIR PROTEIN MSH1, MITOCHONDRIAL"/>
    <property type="match status" value="1"/>
</dbReference>
<dbReference type="PANTHER" id="PTHR11361">
    <property type="entry name" value="DNA MISMATCH REPAIR PROTEIN MUTS FAMILY MEMBER"/>
    <property type="match status" value="1"/>
</dbReference>
<dbReference type="Pfam" id="PF01624">
    <property type="entry name" value="MutS_I"/>
    <property type="match status" value="1"/>
</dbReference>
<dbReference type="Pfam" id="PF05188">
    <property type="entry name" value="MutS_II"/>
    <property type="match status" value="1"/>
</dbReference>
<dbReference type="Pfam" id="PF05192">
    <property type="entry name" value="MutS_III"/>
    <property type="match status" value="1"/>
</dbReference>
<dbReference type="Pfam" id="PF05190">
    <property type="entry name" value="MutS_IV"/>
    <property type="match status" value="1"/>
</dbReference>
<dbReference type="Pfam" id="PF00488">
    <property type="entry name" value="MutS_V"/>
    <property type="match status" value="1"/>
</dbReference>
<dbReference type="PIRSF" id="PIRSF037677">
    <property type="entry name" value="DNA_mis_repair_Msh6"/>
    <property type="match status" value="1"/>
</dbReference>
<dbReference type="SMART" id="SM00534">
    <property type="entry name" value="MUTSac"/>
    <property type="match status" value="1"/>
</dbReference>
<dbReference type="SMART" id="SM00533">
    <property type="entry name" value="MUTSd"/>
    <property type="match status" value="1"/>
</dbReference>
<dbReference type="SUPFAM" id="SSF55271">
    <property type="entry name" value="DNA repair protein MutS, domain I"/>
    <property type="match status" value="1"/>
</dbReference>
<dbReference type="SUPFAM" id="SSF53150">
    <property type="entry name" value="DNA repair protein MutS, domain II"/>
    <property type="match status" value="1"/>
</dbReference>
<dbReference type="SUPFAM" id="SSF48334">
    <property type="entry name" value="DNA repair protein MutS, domain III"/>
    <property type="match status" value="1"/>
</dbReference>
<dbReference type="SUPFAM" id="SSF52540">
    <property type="entry name" value="P-loop containing nucleoside triphosphate hydrolases"/>
    <property type="match status" value="1"/>
</dbReference>
<dbReference type="PROSITE" id="PS00486">
    <property type="entry name" value="DNA_MISMATCH_REPAIR_2"/>
    <property type="match status" value="1"/>
</dbReference>
<organism>
    <name type="scientific">Lactobacillus helveticus (strain DPC 4571)</name>
    <dbReference type="NCBI Taxonomy" id="405566"/>
    <lineage>
        <taxon>Bacteria</taxon>
        <taxon>Bacillati</taxon>
        <taxon>Bacillota</taxon>
        <taxon>Bacilli</taxon>
        <taxon>Lactobacillales</taxon>
        <taxon>Lactobacillaceae</taxon>
        <taxon>Lactobacillus</taxon>
    </lineage>
</organism>
<name>MUTS_LACH4</name>
<proteinExistence type="inferred from homology"/>